<sequence>MAGKMKIRRNDSVEIIAGKERGKRGEVVKVLQEDNKVIVGGLNMIKKAMRKRSQQDQGGIVEIEAPISASNVMVICKKCGKTRIAYEIKDGKKTRICRKCGEAL</sequence>
<organism>
    <name type="scientific">Treponema denticola (strain ATCC 35405 / DSM 14222 / CIP 103919 / JCM 8153 / KCTC 15104)</name>
    <dbReference type="NCBI Taxonomy" id="243275"/>
    <lineage>
        <taxon>Bacteria</taxon>
        <taxon>Pseudomonadati</taxon>
        <taxon>Spirochaetota</taxon>
        <taxon>Spirochaetia</taxon>
        <taxon>Spirochaetales</taxon>
        <taxon>Treponemataceae</taxon>
        <taxon>Treponema</taxon>
    </lineage>
</organism>
<evidence type="ECO:0000255" key="1">
    <source>
        <dbReference type="HAMAP-Rule" id="MF_01326"/>
    </source>
</evidence>
<evidence type="ECO:0000305" key="2"/>
<protein>
    <recommendedName>
        <fullName evidence="1">Large ribosomal subunit protein uL24</fullName>
    </recommendedName>
    <alternativeName>
        <fullName evidence="2">50S ribosomal protein L24</fullName>
    </alternativeName>
</protein>
<dbReference type="EMBL" id="AE017226">
    <property type="protein sequence ID" value="AAS11269.1"/>
    <property type="molecule type" value="Genomic_DNA"/>
</dbReference>
<dbReference type="RefSeq" id="NP_971388.1">
    <property type="nucleotide sequence ID" value="NC_002967.9"/>
</dbReference>
<dbReference type="RefSeq" id="WP_002670017.1">
    <property type="nucleotide sequence ID" value="NC_002967.9"/>
</dbReference>
<dbReference type="SMR" id="Q73PM1"/>
<dbReference type="STRING" id="243275.TDE_0778"/>
<dbReference type="PaxDb" id="243275-TDE_0778"/>
<dbReference type="GeneID" id="2740656"/>
<dbReference type="KEGG" id="tde:TDE_0778"/>
<dbReference type="PATRIC" id="fig|243275.7.peg.751"/>
<dbReference type="eggNOG" id="COG0198">
    <property type="taxonomic scope" value="Bacteria"/>
</dbReference>
<dbReference type="HOGENOM" id="CLU_093315_2_3_12"/>
<dbReference type="OrthoDB" id="9807419at2"/>
<dbReference type="Proteomes" id="UP000008212">
    <property type="component" value="Chromosome"/>
</dbReference>
<dbReference type="GO" id="GO:1990904">
    <property type="term" value="C:ribonucleoprotein complex"/>
    <property type="evidence" value="ECO:0007669"/>
    <property type="project" value="UniProtKB-KW"/>
</dbReference>
<dbReference type="GO" id="GO:0005840">
    <property type="term" value="C:ribosome"/>
    <property type="evidence" value="ECO:0007669"/>
    <property type="project" value="UniProtKB-KW"/>
</dbReference>
<dbReference type="GO" id="GO:0019843">
    <property type="term" value="F:rRNA binding"/>
    <property type="evidence" value="ECO:0007669"/>
    <property type="project" value="UniProtKB-UniRule"/>
</dbReference>
<dbReference type="GO" id="GO:0003735">
    <property type="term" value="F:structural constituent of ribosome"/>
    <property type="evidence" value="ECO:0007669"/>
    <property type="project" value="InterPro"/>
</dbReference>
<dbReference type="GO" id="GO:0006412">
    <property type="term" value="P:translation"/>
    <property type="evidence" value="ECO:0007669"/>
    <property type="project" value="UniProtKB-UniRule"/>
</dbReference>
<dbReference type="CDD" id="cd06089">
    <property type="entry name" value="KOW_RPL26"/>
    <property type="match status" value="1"/>
</dbReference>
<dbReference type="Gene3D" id="2.30.30.30">
    <property type="match status" value="1"/>
</dbReference>
<dbReference type="HAMAP" id="MF_01326_B">
    <property type="entry name" value="Ribosomal_uL24_B"/>
    <property type="match status" value="1"/>
</dbReference>
<dbReference type="InterPro" id="IPR005824">
    <property type="entry name" value="KOW"/>
</dbReference>
<dbReference type="InterPro" id="IPR014722">
    <property type="entry name" value="Rib_uL2_dom2"/>
</dbReference>
<dbReference type="InterPro" id="IPR003256">
    <property type="entry name" value="Ribosomal_uL24"/>
</dbReference>
<dbReference type="InterPro" id="IPR005825">
    <property type="entry name" value="Ribosomal_uL24_CS"/>
</dbReference>
<dbReference type="InterPro" id="IPR041988">
    <property type="entry name" value="Ribosomal_uL24_KOW"/>
</dbReference>
<dbReference type="InterPro" id="IPR008991">
    <property type="entry name" value="Translation_prot_SH3-like_sf"/>
</dbReference>
<dbReference type="NCBIfam" id="TIGR01079">
    <property type="entry name" value="rplX_bact"/>
    <property type="match status" value="1"/>
</dbReference>
<dbReference type="PANTHER" id="PTHR12903">
    <property type="entry name" value="MITOCHONDRIAL RIBOSOMAL PROTEIN L24"/>
    <property type="match status" value="1"/>
</dbReference>
<dbReference type="Pfam" id="PF00467">
    <property type="entry name" value="KOW"/>
    <property type="match status" value="1"/>
</dbReference>
<dbReference type="Pfam" id="PF17136">
    <property type="entry name" value="ribosomal_L24"/>
    <property type="match status" value="1"/>
</dbReference>
<dbReference type="SMART" id="SM00739">
    <property type="entry name" value="KOW"/>
    <property type="match status" value="1"/>
</dbReference>
<dbReference type="SUPFAM" id="SSF50104">
    <property type="entry name" value="Translation proteins SH3-like domain"/>
    <property type="match status" value="1"/>
</dbReference>
<dbReference type="PROSITE" id="PS01108">
    <property type="entry name" value="RIBOSOMAL_L24"/>
    <property type="match status" value="1"/>
</dbReference>
<gene>
    <name evidence="1" type="primary">rplX</name>
    <name type="ordered locus">TDE_0778</name>
</gene>
<keyword id="KW-1185">Reference proteome</keyword>
<keyword id="KW-0687">Ribonucleoprotein</keyword>
<keyword id="KW-0689">Ribosomal protein</keyword>
<keyword id="KW-0694">RNA-binding</keyword>
<keyword id="KW-0699">rRNA-binding</keyword>
<name>RL24_TREDE</name>
<proteinExistence type="inferred from homology"/>
<comment type="function">
    <text evidence="1">One of two assembly initiator proteins, it binds directly to the 5'-end of the 23S rRNA, where it nucleates assembly of the 50S subunit.</text>
</comment>
<comment type="function">
    <text evidence="1">One of the proteins that surrounds the polypeptide exit tunnel on the outside of the subunit.</text>
</comment>
<comment type="subunit">
    <text evidence="1">Part of the 50S ribosomal subunit.</text>
</comment>
<comment type="similarity">
    <text evidence="1">Belongs to the universal ribosomal protein uL24 family.</text>
</comment>
<feature type="chain" id="PRO_0000241683" description="Large ribosomal subunit protein uL24">
    <location>
        <begin position="1"/>
        <end position="104"/>
    </location>
</feature>
<accession>Q73PM1</accession>
<reference key="1">
    <citation type="journal article" date="2004" name="Proc. Natl. Acad. Sci. U.S.A.">
        <title>Comparison of the genome of the oral pathogen Treponema denticola with other spirochete genomes.</title>
        <authorList>
            <person name="Seshadri R."/>
            <person name="Myers G.S.A."/>
            <person name="Tettelin H."/>
            <person name="Eisen J.A."/>
            <person name="Heidelberg J.F."/>
            <person name="Dodson R.J."/>
            <person name="Davidsen T.M."/>
            <person name="DeBoy R.T."/>
            <person name="Fouts D.E."/>
            <person name="Haft D.H."/>
            <person name="Selengut J."/>
            <person name="Ren Q."/>
            <person name="Brinkac L.M."/>
            <person name="Madupu R."/>
            <person name="Kolonay J.F."/>
            <person name="Durkin S.A."/>
            <person name="Daugherty S.C."/>
            <person name="Shetty J."/>
            <person name="Shvartsbeyn A."/>
            <person name="Gebregeorgis E."/>
            <person name="Geer K."/>
            <person name="Tsegaye G."/>
            <person name="Malek J.A."/>
            <person name="Ayodeji B."/>
            <person name="Shatsman S."/>
            <person name="McLeod M.P."/>
            <person name="Smajs D."/>
            <person name="Howell J.K."/>
            <person name="Pal S."/>
            <person name="Amin A."/>
            <person name="Vashisth P."/>
            <person name="McNeill T.Z."/>
            <person name="Xiang Q."/>
            <person name="Sodergren E."/>
            <person name="Baca E."/>
            <person name="Weinstock G.M."/>
            <person name="Norris S.J."/>
            <person name="Fraser C.M."/>
            <person name="Paulsen I.T."/>
        </authorList>
    </citation>
    <scope>NUCLEOTIDE SEQUENCE [LARGE SCALE GENOMIC DNA]</scope>
    <source>
        <strain>ATCC 35405 / DSM 14222 / CIP 103919 / JCM 8153 / KCTC 15104</strain>
    </source>
</reference>